<proteinExistence type="inferred from homology"/>
<feature type="chain" id="PRO_1000056160" description="Bifunctional protein GlmU">
    <location>
        <begin position="1"/>
        <end position="456"/>
    </location>
</feature>
<feature type="region of interest" description="Pyrophosphorylase" evidence="1">
    <location>
        <begin position="1"/>
        <end position="229"/>
    </location>
</feature>
<feature type="region of interest" description="Linker" evidence="1">
    <location>
        <begin position="230"/>
        <end position="250"/>
    </location>
</feature>
<feature type="region of interest" description="N-acetyltransferase" evidence="1">
    <location>
        <begin position="251"/>
        <end position="456"/>
    </location>
</feature>
<feature type="active site" description="Proton acceptor" evidence="1">
    <location>
        <position position="363"/>
    </location>
</feature>
<feature type="binding site" evidence="1">
    <location>
        <begin position="11"/>
        <end position="14"/>
    </location>
    <ligand>
        <name>UDP-N-acetyl-alpha-D-glucosamine</name>
        <dbReference type="ChEBI" id="CHEBI:57705"/>
    </ligand>
</feature>
<feature type="binding site" evidence="1">
    <location>
        <position position="25"/>
    </location>
    <ligand>
        <name>UDP-N-acetyl-alpha-D-glucosamine</name>
        <dbReference type="ChEBI" id="CHEBI:57705"/>
    </ligand>
</feature>
<feature type="binding site" evidence="1">
    <location>
        <position position="76"/>
    </location>
    <ligand>
        <name>UDP-N-acetyl-alpha-D-glucosamine</name>
        <dbReference type="ChEBI" id="CHEBI:57705"/>
    </ligand>
</feature>
<feature type="binding site" evidence="1">
    <location>
        <begin position="81"/>
        <end position="82"/>
    </location>
    <ligand>
        <name>UDP-N-acetyl-alpha-D-glucosamine</name>
        <dbReference type="ChEBI" id="CHEBI:57705"/>
    </ligand>
</feature>
<feature type="binding site" evidence="1">
    <location>
        <begin position="103"/>
        <end position="105"/>
    </location>
    <ligand>
        <name>UDP-N-acetyl-alpha-D-glucosamine</name>
        <dbReference type="ChEBI" id="CHEBI:57705"/>
    </ligand>
</feature>
<feature type="binding site" evidence="1">
    <location>
        <position position="105"/>
    </location>
    <ligand>
        <name>Mg(2+)</name>
        <dbReference type="ChEBI" id="CHEBI:18420"/>
    </ligand>
</feature>
<feature type="binding site" evidence="1">
    <location>
        <position position="140"/>
    </location>
    <ligand>
        <name>UDP-N-acetyl-alpha-D-glucosamine</name>
        <dbReference type="ChEBI" id="CHEBI:57705"/>
    </ligand>
</feature>
<feature type="binding site" evidence="1">
    <location>
        <position position="154"/>
    </location>
    <ligand>
        <name>UDP-N-acetyl-alpha-D-glucosamine</name>
        <dbReference type="ChEBI" id="CHEBI:57705"/>
    </ligand>
</feature>
<feature type="binding site" evidence="1">
    <location>
        <position position="169"/>
    </location>
    <ligand>
        <name>UDP-N-acetyl-alpha-D-glucosamine</name>
        <dbReference type="ChEBI" id="CHEBI:57705"/>
    </ligand>
</feature>
<feature type="binding site" evidence="1">
    <location>
        <position position="227"/>
    </location>
    <ligand>
        <name>Mg(2+)</name>
        <dbReference type="ChEBI" id="CHEBI:18420"/>
    </ligand>
</feature>
<feature type="binding site" evidence="1">
    <location>
        <position position="227"/>
    </location>
    <ligand>
        <name>UDP-N-acetyl-alpha-D-glucosamine</name>
        <dbReference type="ChEBI" id="CHEBI:57705"/>
    </ligand>
</feature>
<feature type="binding site" evidence="1">
    <location>
        <position position="333"/>
    </location>
    <ligand>
        <name>UDP-N-acetyl-alpha-D-glucosamine</name>
        <dbReference type="ChEBI" id="CHEBI:57705"/>
    </ligand>
</feature>
<feature type="binding site" evidence="1">
    <location>
        <position position="351"/>
    </location>
    <ligand>
        <name>UDP-N-acetyl-alpha-D-glucosamine</name>
        <dbReference type="ChEBI" id="CHEBI:57705"/>
    </ligand>
</feature>
<feature type="binding site" evidence="1">
    <location>
        <position position="366"/>
    </location>
    <ligand>
        <name>UDP-N-acetyl-alpha-D-glucosamine</name>
        <dbReference type="ChEBI" id="CHEBI:57705"/>
    </ligand>
</feature>
<feature type="binding site" evidence="1">
    <location>
        <position position="377"/>
    </location>
    <ligand>
        <name>UDP-N-acetyl-alpha-D-glucosamine</name>
        <dbReference type="ChEBI" id="CHEBI:57705"/>
    </ligand>
</feature>
<feature type="binding site" evidence="1">
    <location>
        <position position="380"/>
    </location>
    <ligand>
        <name>acetyl-CoA</name>
        <dbReference type="ChEBI" id="CHEBI:57288"/>
    </ligand>
</feature>
<feature type="binding site" evidence="1">
    <location>
        <begin position="386"/>
        <end position="387"/>
    </location>
    <ligand>
        <name>acetyl-CoA</name>
        <dbReference type="ChEBI" id="CHEBI:57288"/>
    </ligand>
</feature>
<feature type="binding site" evidence="1">
    <location>
        <position position="405"/>
    </location>
    <ligand>
        <name>acetyl-CoA</name>
        <dbReference type="ChEBI" id="CHEBI:57288"/>
    </ligand>
</feature>
<feature type="binding site" evidence="1">
    <location>
        <position position="423"/>
    </location>
    <ligand>
        <name>acetyl-CoA</name>
        <dbReference type="ChEBI" id="CHEBI:57288"/>
    </ligand>
</feature>
<feature type="binding site" evidence="1">
    <location>
        <position position="440"/>
    </location>
    <ligand>
        <name>acetyl-CoA</name>
        <dbReference type="ChEBI" id="CHEBI:57288"/>
    </ligand>
</feature>
<accession>A5UE94</accession>
<dbReference type="EC" id="2.7.7.23" evidence="1"/>
<dbReference type="EC" id="2.3.1.157" evidence="1"/>
<dbReference type="EMBL" id="CP000671">
    <property type="protein sequence ID" value="ABQ99095.1"/>
    <property type="molecule type" value="Genomic_DNA"/>
</dbReference>
<dbReference type="SMR" id="A5UE94"/>
<dbReference type="KEGG" id="hip:CGSHiEE_09010"/>
<dbReference type="HOGENOM" id="CLU_029499_15_2_6"/>
<dbReference type="UniPathway" id="UPA00113">
    <property type="reaction ID" value="UER00532"/>
</dbReference>
<dbReference type="UniPathway" id="UPA00113">
    <property type="reaction ID" value="UER00533"/>
</dbReference>
<dbReference type="UniPathway" id="UPA00973"/>
<dbReference type="GO" id="GO:0005737">
    <property type="term" value="C:cytoplasm"/>
    <property type="evidence" value="ECO:0007669"/>
    <property type="project" value="UniProtKB-SubCell"/>
</dbReference>
<dbReference type="GO" id="GO:0016020">
    <property type="term" value="C:membrane"/>
    <property type="evidence" value="ECO:0007669"/>
    <property type="project" value="GOC"/>
</dbReference>
<dbReference type="GO" id="GO:0019134">
    <property type="term" value="F:glucosamine-1-phosphate N-acetyltransferase activity"/>
    <property type="evidence" value="ECO:0007669"/>
    <property type="project" value="UniProtKB-UniRule"/>
</dbReference>
<dbReference type="GO" id="GO:0000287">
    <property type="term" value="F:magnesium ion binding"/>
    <property type="evidence" value="ECO:0007669"/>
    <property type="project" value="UniProtKB-UniRule"/>
</dbReference>
<dbReference type="GO" id="GO:0003977">
    <property type="term" value="F:UDP-N-acetylglucosamine diphosphorylase activity"/>
    <property type="evidence" value="ECO:0007669"/>
    <property type="project" value="UniProtKB-UniRule"/>
</dbReference>
<dbReference type="GO" id="GO:0000902">
    <property type="term" value="P:cell morphogenesis"/>
    <property type="evidence" value="ECO:0007669"/>
    <property type="project" value="UniProtKB-UniRule"/>
</dbReference>
<dbReference type="GO" id="GO:0071555">
    <property type="term" value="P:cell wall organization"/>
    <property type="evidence" value="ECO:0007669"/>
    <property type="project" value="UniProtKB-KW"/>
</dbReference>
<dbReference type="GO" id="GO:0009245">
    <property type="term" value="P:lipid A biosynthetic process"/>
    <property type="evidence" value="ECO:0007669"/>
    <property type="project" value="UniProtKB-UniRule"/>
</dbReference>
<dbReference type="GO" id="GO:0009252">
    <property type="term" value="P:peptidoglycan biosynthetic process"/>
    <property type="evidence" value="ECO:0007669"/>
    <property type="project" value="UniProtKB-UniRule"/>
</dbReference>
<dbReference type="GO" id="GO:0008360">
    <property type="term" value="P:regulation of cell shape"/>
    <property type="evidence" value="ECO:0007669"/>
    <property type="project" value="UniProtKB-KW"/>
</dbReference>
<dbReference type="GO" id="GO:0006048">
    <property type="term" value="P:UDP-N-acetylglucosamine biosynthetic process"/>
    <property type="evidence" value="ECO:0007669"/>
    <property type="project" value="UniProtKB-UniPathway"/>
</dbReference>
<dbReference type="CDD" id="cd02540">
    <property type="entry name" value="GT2_GlmU_N_bac"/>
    <property type="match status" value="1"/>
</dbReference>
<dbReference type="CDD" id="cd03353">
    <property type="entry name" value="LbH_GlmU_C"/>
    <property type="match status" value="1"/>
</dbReference>
<dbReference type="FunFam" id="3.90.550.10:FF:000006">
    <property type="entry name" value="Bifunctional protein GlmU"/>
    <property type="match status" value="1"/>
</dbReference>
<dbReference type="Gene3D" id="2.160.10.10">
    <property type="entry name" value="Hexapeptide repeat proteins"/>
    <property type="match status" value="1"/>
</dbReference>
<dbReference type="Gene3D" id="3.90.550.10">
    <property type="entry name" value="Spore Coat Polysaccharide Biosynthesis Protein SpsA, Chain A"/>
    <property type="match status" value="1"/>
</dbReference>
<dbReference type="HAMAP" id="MF_01631">
    <property type="entry name" value="GlmU"/>
    <property type="match status" value="1"/>
</dbReference>
<dbReference type="InterPro" id="IPR005882">
    <property type="entry name" value="Bifunctional_GlmU"/>
</dbReference>
<dbReference type="InterPro" id="IPR050065">
    <property type="entry name" value="GlmU-like"/>
</dbReference>
<dbReference type="InterPro" id="IPR038009">
    <property type="entry name" value="GlmU_C_LbH"/>
</dbReference>
<dbReference type="InterPro" id="IPR001451">
    <property type="entry name" value="Hexapep"/>
</dbReference>
<dbReference type="InterPro" id="IPR018357">
    <property type="entry name" value="Hexapep_transf_CS"/>
</dbReference>
<dbReference type="InterPro" id="IPR025877">
    <property type="entry name" value="MobA-like_NTP_Trfase"/>
</dbReference>
<dbReference type="InterPro" id="IPR029044">
    <property type="entry name" value="Nucleotide-diphossugar_trans"/>
</dbReference>
<dbReference type="InterPro" id="IPR011004">
    <property type="entry name" value="Trimer_LpxA-like_sf"/>
</dbReference>
<dbReference type="NCBIfam" id="TIGR01173">
    <property type="entry name" value="glmU"/>
    <property type="match status" value="1"/>
</dbReference>
<dbReference type="NCBIfam" id="NF006986">
    <property type="entry name" value="PRK09451.1"/>
    <property type="match status" value="1"/>
</dbReference>
<dbReference type="PANTHER" id="PTHR43584:SF3">
    <property type="entry name" value="BIFUNCTIONAL PROTEIN GLMU"/>
    <property type="match status" value="1"/>
</dbReference>
<dbReference type="PANTHER" id="PTHR43584">
    <property type="entry name" value="NUCLEOTIDYL TRANSFERASE"/>
    <property type="match status" value="1"/>
</dbReference>
<dbReference type="Pfam" id="PF00132">
    <property type="entry name" value="Hexapep"/>
    <property type="match status" value="2"/>
</dbReference>
<dbReference type="Pfam" id="PF12804">
    <property type="entry name" value="NTP_transf_3"/>
    <property type="match status" value="1"/>
</dbReference>
<dbReference type="SUPFAM" id="SSF53448">
    <property type="entry name" value="Nucleotide-diphospho-sugar transferases"/>
    <property type="match status" value="1"/>
</dbReference>
<dbReference type="SUPFAM" id="SSF51161">
    <property type="entry name" value="Trimeric LpxA-like enzymes"/>
    <property type="match status" value="1"/>
</dbReference>
<dbReference type="PROSITE" id="PS00101">
    <property type="entry name" value="HEXAPEP_TRANSFERASES"/>
    <property type="match status" value="1"/>
</dbReference>
<name>GLMU_HAEIE</name>
<keyword id="KW-0012">Acyltransferase</keyword>
<keyword id="KW-0133">Cell shape</keyword>
<keyword id="KW-0961">Cell wall biogenesis/degradation</keyword>
<keyword id="KW-0963">Cytoplasm</keyword>
<keyword id="KW-0460">Magnesium</keyword>
<keyword id="KW-0479">Metal-binding</keyword>
<keyword id="KW-0511">Multifunctional enzyme</keyword>
<keyword id="KW-0548">Nucleotidyltransferase</keyword>
<keyword id="KW-0573">Peptidoglycan synthesis</keyword>
<keyword id="KW-0677">Repeat</keyword>
<keyword id="KW-0808">Transferase</keyword>
<organism>
    <name type="scientific">Haemophilus influenzae (strain PittEE)</name>
    <dbReference type="NCBI Taxonomy" id="374930"/>
    <lineage>
        <taxon>Bacteria</taxon>
        <taxon>Pseudomonadati</taxon>
        <taxon>Pseudomonadota</taxon>
        <taxon>Gammaproteobacteria</taxon>
        <taxon>Pasteurellales</taxon>
        <taxon>Pasteurellaceae</taxon>
        <taxon>Haemophilus</taxon>
    </lineage>
</organism>
<reference key="1">
    <citation type="journal article" date="2007" name="Genome Biol.">
        <title>Characterization and modeling of the Haemophilus influenzae core and supragenomes based on the complete genomic sequences of Rd and 12 clinical nontypeable strains.</title>
        <authorList>
            <person name="Hogg J.S."/>
            <person name="Hu F.Z."/>
            <person name="Janto B."/>
            <person name="Boissy R."/>
            <person name="Hayes J."/>
            <person name="Keefe R."/>
            <person name="Post J.C."/>
            <person name="Ehrlich G.D."/>
        </authorList>
    </citation>
    <scope>NUCLEOTIDE SEQUENCE [LARGE SCALE GENOMIC DNA]</scope>
    <source>
        <strain>PittEE</strain>
    </source>
</reference>
<sequence length="456" mass="49165">MTKKALSAVILAAGKGTRMYSDLPKVLHTIAGKPMVKHVIDTAHQLGAENIHLIYGHGGDVMRTHLANEQVNWVLQTEQLGTAHAVQQAAPFFKDNENIVVLYGDAPLITKETLEKLIDAKPENGIALLTVNLDNPTGYGRIIRENGNVVAIVEQKDANADQLNIKEVNTGVMVSDGASFKKWLARVGNNNAQGEYYLTDLIALANQDNCQVVAVQATDVMEVEGANNRLQLAALERYLQNKQASKLLLEGVMIYDPARFDLRGTLEHGKDVEIDVNVIIEGNVKLGDRVKIGAGCVLKNVVIGNDVEIKPYSVLEDSIVGEKAAIGPFSRLRPGAELAAETHVGNFVEIKKSTVGKGSKVNHLTYVGDSEIGSNCNIGAGVITCNYDGANKFKTIIGDDVFVGSDTQLVAPVKVANGATIGAGTTITRDVGENELVITRVAQRHIQGWQRPIKKK</sequence>
<evidence type="ECO:0000255" key="1">
    <source>
        <dbReference type="HAMAP-Rule" id="MF_01631"/>
    </source>
</evidence>
<protein>
    <recommendedName>
        <fullName evidence="1">Bifunctional protein GlmU</fullName>
    </recommendedName>
    <domain>
        <recommendedName>
            <fullName evidence="1">UDP-N-acetylglucosamine pyrophosphorylase</fullName>
            <ecNumber evidence="1">2.7.7.23</ecNumber>
        </recommendedName>
        <alternativeName>
            <fullName evidence="1">N-acetylglucosamine-1-phosphate uridyltransferase</fullName>
        </alternativeName>
    </domain>
    <domain>
        <recommendedName>
            <fullName evidence="1">Glucosamine-1-phosphate N-acetyltransferase</fullName>
            <ecNumber evidence="1">2.3.1.157</ecNumber>
        </recommendedName>
    </domain>
</protein>
<gene>
    <name evidence="1" type="primary">glmU</name>
    <name type="ordered locus">CGSHiEE_09010</name>
</gene>
<comment type="function">
    <text evidence="1">Catalyzes the last two sequential reactions in the de novo biosynthetic pathway for UDP-N-acetylglucosamine (UDP-GlcNAc). The C-terminal domain catalyzes the transfer of acetyl group from acetyl coenzyme A to glucosamine-1-phosphate (GlcN-1-P) to produce N-acetylglucosamine-1-phosphate (GlcNAc-1-P), which is converted into UDP-GlcNAc by the transfer of uridine 5-monophosphate (from uridine 5-triphosphate), a reaction catalyzed by the N-terminal domain.</text>
</comment>
<comment type="catalytic activity">
    <reaction evidence="1">
        <text>alpha-D-glucosamine 1-phosphate + acetyl-CoA = N-acetyl-alpha-D-glucosamine 1-phosphate + CoA + H(+)</text>
        <dbReference type="Rhea" id="RHEA:13725"/>
        <dbReference type="ChEBI" id="CHEBI:15378"/>
        <dbReference type="ChEBI" id="CHEBI:57287"/>
        <dbReference type="ChEBI" id="CHEBI:57288"/>
        <dbReference type="ChEBI" id="CHEBI:57776"/>
        <dbReference type="ChEBI" id="CHEBI:58516"/>
        <dbReference type="EC" id="2.3.1.157"/>
    </reaction>
</comment>
<comment type="catalytic activity">
    <reaction evidence="1">
        <text>N-acetyl-alpha-D-glucosamine 1-phosphate + UTP + H(+) = UDP-N-acetyl-alpha-D-glucosamine + diphosphate</text>
        <dbReference type="Rhea" id="RHEA:13509"/>
        <dbReference type="ChEBI" id="CHEBI:15378"/>
        <dbReference type="ChEBI" id="CHEBI:33019"/>
        <dbReference type="ChEBI" id="CHEBI:46398"/>
        <dbReference type="ChEBI" id="CHEBI:57705"/>
        <dbReference type="ChEBI" id="CHEBI:57776"/>
        <dbReference type="EC" id="2.7.7.23"/>
    </reaction>
</comment>
<comment type="cofactor">
    <cofactor evidence="1">
        <name>Mg(2+)</name>
        <dbReference type="ChEBI" id="CHEBI:18420"/>
    </cofactor>
    <text evidence="1">Binds 1 Mg(2+) ion per subunit.</text>
</comment>
<comment type="pathway">
    <text evidence="1">Nucleotide-sugar biosynthesis; UDP-N-acetyl-alpha-D-glucosamine biosynthesis; N-acetyl-alpha-D-glucosamine 1-phosphate from alpha-D-glucosamine 6-phosphate (route II): step 2/2.</text>
</comment>
<comment type="pathway">
    <text evidence="1">Nucleotide-sugar biosynthesis; UDP-N-acetyl-alpha-D-glucosamine biosynthesis; UDP-N-acetyl-alpha-D-glucosamine from N-acetyl-alpha-D-glucosamine 1-phosphate: step 1/1.</text>
</comment>
<comment type="pathway">
    <text evidence="1">Bacterial outer membrane biogenesis; LPS lipid A biosynthesis.</text>
</comment>
<comment type="subunit">
    <text evidence="1">Homotrimer.</text>
</comment>
<comment type="subcellular location">
    <subcellularLocation>
        <location evidence="1">Cytoplasm</location>
    </subcellularLocation>
</comment>
<comment type="similarity">
    <text evidence="1">In the N-terminal section; belongs to the N-acetylglucosamine-1-phosphate uridyltransferase family.</text>
</comment>
<comment type="similarity">
    <text evidence="1">In the C-terminal section; belongs to the transferase hexapeptide repeat family.</text>
</comment>